<organism>
    <name type="scientific">Xylella fastidiosa (strain M12)</name>
    <dbReference type="NCBI Taxonomy" id="405440"/>
    <lineage>
        <taxon>Bacteria</taxon>
        <taxon>Pseudomonadati</taxon>
        <taxon>Pseudomonadota</taxon>
        <taxon>Gammaproteobacteria</taxon>
        <taxon>Lysobacterales</taxon>
        <taxon>Lysobacteraceae</taxon>
        <taxon>Xylella</taxon>
    </lineage>
</organism>
<dbReference type="EC" id="3.1.26.3" evidence="1"/>
<dbReference type="EMBL" id="CP000941">
    <property type="protein sequence ID" value="ACA12367.1"/>
    <property type="molecule type" value="Genomic_DNA"/>
</dbReference>
<dbReference type="RefSeq" id="WP_004083431.1">
    <property type="nucleotide sequence ID" value="NC_010513.1"/>
</dbReference>
<dbReference type="SMR" id="B0U3D8"/>
<dbReference type="KEGG" id="xfm:Xfasm12_1444"/>
<dbReference type="HOGENOM" id="CLU_000907_1_1_6"/>
<dbReference type="GO" id="GO:0005737">
    <property type="term" value="C:cytoplasm"/>
    <property type="evidence" value="ECO:0007669"/>
    <property type="project" value="UniProtKB-SubCell"/>
</dbReference>
<dbReference type="GO" id="GO:0003725">
    <property type="term" value="F:double-stranded RNA binding"/>
    <property type="evidence" value="ECO:0007669"/>
    <property type="project" value="TreeGrafter"/>
</dbReference>
<dbReference type="GO" id="GO:0046872">
    <property type="term" value="F:metal ion binding"/>
    <property type="evidence" value="ECO:0007669"/>
    <property type="project" value="UniProtKB-KW"/>
</dbReference>
<dbReference type="GO" id="GO:0004525">
    <property type="term" value="F:ribonuclease III activity"/>
    <property type="evidence" value="ECO:0007669"/>
    <property type="project" value="UniProtKB-UniRule"/>
</dbReference>
<dbReference type="GO" id="GO:0019843">
    <property type="term" value="F:rRNA binding"/>
    <property type="evidence" value="ECO:0007669"/>
    <property type="project" value="UniProtKB-KW"/>
</dbReference>
<dbReference type="GO" id="GO:0006397">
    <property type="term" value="P:mRNA processing"/>
    <property type="evidence" value="ECO:0007669"/>
    <property type="project" value="UniProtKB-UniRule"/>
</dbReference>
<dbReference type="GO" id="GO:0010468">
    <property type="term" value="P:regulation of gene expression"/>
    <property type="evidence" value="ECO:0007669"/>
    <property type="project" value="TreeGrafter"/>
</dbReference>
<dbReference type="GO" id="GO:0006364">
    <property type="term" value="P:rRNA processing"/>
    <property type="evidence" value="ECO:0007669"/>
    <property type="project" value="UniProtKB-UniRule"/>
</dbReference>
<dbReference type="GO" id="GO:0008033">
    <property type="term" value="P:tRNA processing"/>
    <property type="evidence" value="ECO:0007669"/>
    <property type="project" value="UniProtKB-KW"/>
</dbReference>
<dbReference type="CDD" id="cd10845">
    <property type="entry name" value="DSRM_RNAse_III_family"/>
    <property type="match status" value="1"/>
</dbReference>
<dbReference type="CDD" id="cd00593">
    <property type="entry name" value="RIBOc"/>
    <property type="match status" value="1"/>
</dbReference>
<dbReference type="FunFam" id="1.10.1520.10:FF:000001">
    <property type="entry name" value="Ribonuclease 3"/>
    <property type="match status" value="1"/>
</dbReference>
<dbReference type="FunFam" id="3.30.160.20:FF:000003">
    <property type="entry name" value="Ribonuclease 3"/>
    <property type="match status" value="1"/>
</dbReference>
<dbReference type="Gene3D" id="3.30.160.20">
    <property type="match status" value="1"/>
</dbReference>
<dbReference type="Gene3D" id="1.10.1520.10">
    <property type="entry name" value="Ribonuclease III domain"/>
    <property type="match status" value="1"/>
</dbReference>
<dbReference type="HAMAP" id="MF_00104">
    <property type="entry name" value="RNase_III"/>
    <property type="match status" value="1"/>
</dbReference>
<dbReference type="InterPro" id="IPR014720">
    <property type="entry name" value="dsRBD_dom"/>
</dbReference>
<dbReference type="InterPro" id="IPR011907">
    <property type="entry name" value="RNase_III"/>
</dbReference>
<dbReference type="InterPro" id="IPR000999">
    <property type="entry name" value="RNase_III_dom"/>
</dbReference>
<dbReference type="InterPro" id="IPR036389">
    <property type="entry name" value="RNase_III_sf"/>
</dbReference>
<dbReference type="NCBIfam" id="TIGR02191">
    <property type="entry name" value="RNaseIII"/>
    <property type="match status" value="1"/>
</dbReference>
<dbReference type="PANTHER" id="PTHR11207:SF0">
    <property type="entry name" value="RIBONUCLEASE 3"/>
    <property type="match status" value="1"/>
</dbReference>
<dbReference type="PANTHER" id="PTHR11207">
    <property type="entry name" value="RIBONUCLEASE III"/>
    <property type="match status" value="1"/>
</dbReference>
<dbReference type="Pfam" id="PF00035">
    <property type="entry name" value="dsrm"/>
    <property type="match status" value="1"/>
</dbReference>
<dbReference type="Pfam" id="PF14622">
    <property type="entry name" value="Ribonucleas_3_3"/>
    <property type="match status" value="1"/>
</dbReference>
<dbReference type="SMART" id="SM00358">
    <property type="entry name" value="DSRM"/>
    <property type="match status" value="1"/>
</dbReference>
<dbReference type="SMART" id="SM00535">
    <property type="entry name" value="RIBOc"/>
    <property type="match status" value="1"/>
</dbReference>
<dbReference type="SUPFAM" id="SSF54768">
    <property type="entry name" value="dsRNA-binding domain-like"/>
    <property type="match status" value="1"/>
</dbReference>
<dbReference type="SUPFAM" id="SSF69065">
    <property type="entry name" value="RNase III domain-like"/>
    <property type="match status" value="1"/>
</dbReference>
<dbReference type="PROSITE" id="PS50137">
    <property type="entry name" value="DS_RBD"/>
    <property type="match status" value="1"/>
</dbReference>
<dbReference type="PROSITE" id="PS00517">
    <property type="entry name" value="RNASE_3_1"/>
    <property type="match status" value="1"/>
</dbReference>
<dbReference type="PROSITE" id="PS50142">
    <property type="entry name" value="RNASE_3_2"/>
    <property type="match status" value="1"/>
</dbReference>
<keyword id="KW-0963">Cytoplasm</keyword>
<keyword id="KW-0255">Endonuclease</keyword>
<keyword id="KW-0378">Hydrolase</keyword>
<keyword id="KW-0460">Magnesium</keyword>
<keyword id="KW-0479">Metal-binding</keyword>
<keyword id="KW-0507">mRNA processing</keyword>
<keyword id="KW-0540">Nuclease</keyword>
<keyword id="KW-0694">RNA-binding</keyword>
<keyword id="KW-0698">rRNA processing</keyword>
<keyword id="KW-0699">rRNA-binding</keyword>
<keyword id="KW-0819">tRNA processing</keyword>
<protein>
    <recommendedName>
        <fullName evidence="1">Ribonuclease 3</fullName>
        <ecNumber evidence="1">3.1.26.3</ecNumber>
    </recommendedName>
    <alternativeName>
        <fullName evidence="1">Ribonuclease III</fullName>
        <shortName evidence="1">RNase III</shortName>
    </alternativeName>
</protein>
<comment type="function">
    <text evidence="1">Digests double-stranded RNA. Involved in the processing of primary rRNA transcript to yield the immediate precursors to the large and small rRNAs (23S and 16S). Processes some mRNAs, and tRNAs when they are encoded in the rRNA operon. Processes pre-crRNA and tracrRNA of type II CRISPR loci if present in the organism.</text>
</comment>
<comment type="catalytic activity">
    <reaction evidence="1">
        <text>Endonucleolytic cleavage to 5'-phosphomonoester.</text>
        <dbReference type="EC" id="3.1.26.3"/>
    </reaction>
</comment>
<comment type="cofactor">
    <cofactor evidence="1">
        <name>Mg(2+)</name>
        <dbReference type="ChEBI" id="CHEBI:18420"/>
    </cofactor>
</comment>
<comment type="subunit">
    <text evidence="1">Homodimer.</text>
</comment>
<comment type="subcellular location">
    <subcellularLocation>
        <location evidence="1">Cytoplasm</location>
    </subcellularLocation>
</comment>
<comment type="similarity">
    <text evidence="1">Belongs to the ribonuclease III family.</text>
</comment>
<reference key="1">
    <citation type="journal article" date="2010" name="J. Bacteriol.">
        <title>Whole genome sequences of two Xylella fastidiosa strains (M12 and M23) causing almond leaf scorch disease in California.</title>
        <authorList>
            <person name="Chen J."/>
            <person name="Xie G."/>
            <person name="Han S."/>
            <person name="Chertkov O."/>
            <person name="Sims D."/>
            <person name="Civerolo E.L."/>
        </authorList>
    </citation>
    <scope>NUCLEOTIDE SEQUENCE [LARGE SCALE GENOMIC DNA]</scope>
    <source>
        <strain>M12</strain>
    </source>
</reference>
<evidence type="ECO:0000255" key="1">
    <source>
        <dbReference type="HAMAP-Rule" id="MF_00104"/>
    </source>
</evidence>
<evidence type="ECO:0000256" key="2">
    <source>
        <dbReference type="SAM" id="MobiDB-lite"/>
    </source>
</evidence>
<proteinExistence type="inferred from homology"/>
<name>RNC_XYLFM</name>
<feature type="chain" id="PRO_1000094143" description="Ribonuclease 3">
    <location>
        <begin position="1"/>
        <end position="227"/>
    </location>
</feature>
<feature type="domain" description="RNase III" evidence="1">
    <location>
        <begin position="6"/>
        <end position="128"/>
    </location>
</feature>
<feature type="domain" description="DRBM" evidence="1">
    <location>
        <begin position="155"/>
        <end position="225"/>
    </location>
</feature>
<feature type="region of interest" description="Disordered" evidence="2">
    <location>
        <begin position="203"/>
        <end position="227"/>
    </location>
</feature>
<feature type="compositionally biased region" description="Basic and acidic residues" evidence="2">
    <location>
        <begin position="203"/>
        <end position="212"/>
    </location>
</feature>
<feature type="active site" evidence="1">
    <location>
        <position position="45"/>
    </location>
</feature>
<feature type="active site" evidence="1">
    <location>
        <position position="117"/>
    </location>
</feature>
<feature type="binding site" evidence="1">
    <location>
        <position position="41"/>
    </location>
    <ligand>
        <name>Mg(2+)</name>
        <dbReference type="ChEBI" id="CHEBI:18420"/>
    </ligand>
</feature>
<feature type="binding site" evidence="1">
    <location>
        <position position="114"/>
    </location>
    <ligand>
        <name>Mg(2+)</name>
        <dbReference type="ChEBI" id="CHEBI:18420"/>
    </ligand>
</feature>
<feature type="binding site" evidence="1">
    <location>
        <position position="117"/>
    </location>
    <ligand>
        <name>Mg(2+)</name>
        <dbReference type="ChEBI" id="CHEBI:18420"/>
    </ligand>
</feature>
<gene>
    <name evidence="1" type="primary">rnc</name>
    <name type="ordered locus">Xfasm12_1444</name>
</gene>
<sequence>MISSKASDYQQRIGYVFTDPSLLLQALRHCSAGTPHNERLEFLGDSVVNLLIAEALFQRWPRADEGALTRARSELVRETSLASIARTMQLGEQLILGPGELKSGGHRRDSILADAVEAVIAAIYLDADLATCRTVVLPWFETALTALPVGKPEKDPKTRLQEWLQARQWSLPVYELIFESGDPHTKHFRVSCTLGELKLRTEGEGSSRRLAEQDAASHAINQLDSNK</sequence>
<accession>B0U3D8</accession>